<accession>Q5R5X4</accession>
<organism>
    <name type="scientific">Pongo abelii</name>
    <name type="common">Sumatran orangutan</name>
    <name type="synonym">Pongo pygmaeus abelii</name>
    <dbReference type="NCBI Taxonomy" id="9601"/>
    <lineage>
        <taxon>Eukaryota</taxon>
        <taxon>Metazoa</taxon>
        <taxon>Chordata</taxon>
        <taxon>Craniata</taxon>
        <taxon>Vertebrata</taxon>
        <taxon>Euteleostomi</taxon>
        <taxon>Mammalia</taxon>
        <taxon>Eutheria</taxon>
        <taxon>Euarchontoglires</taxon>
        <taxon>Primates</taxon>
        <taxon>Haplorrhini</taxon>
        <taxon>Catarrhini</taxon>
        <taxon>Hominidae</taxon>
        <taxon>Pongo</taxon>
    </lineage>
</organism>
<sequence>MVGFGANRRAGRLPSLVLVVLLVVIVVLAFNYWSISSRHVLLQEEVAELQGQVQRTEVARGRLEKRNSGLLLLVDTHKKQIDQKEADYGRLSSRLQAREGLGKRCEDDKVKLQNNISYQMADIHHLKEQLAELRQEFLRQEDQLQDYRKNNTYLVKRLEYESFQCGQQIKELRAQHEENIKKLADQFLQEQKQEAHKIQSNDGKELDINDQVVPKNIPKVAENVADKNEEPSSNHIPHGKEQIKRGGDAGMPGIEENDLAKVDDLPPALRKPPISVSQHESHQTISHIPTGQPLSPNMPPDSHVNHNGNPGTSKQNPSSPLQRLIPGSNLDSEPRIQTDILKQATKDRVSDFHKLKQSRFFDENESPVDPQHGSKLADYNGDDGNVGEYEADKQAELAYNEEEDGDGGEEDVQDDEERELQMDPADYGKQHFNDVL</sequence>
<evidence type="ECO:0000250" key="1">
    <source>
        <dbReference type="UniProtKB" id="Q6P4E1"/>
    </source>
</evidence>
<evidence type="ECO:0000255" key="2"/>
<evidence type="ECO:0000256" key="3">
    <source>
        <dbReference type="SAM" id="MobiDB-lite"/>
    </source>
</evidence>
<evidence type="ECO:0000305" key="4"/>
<comment type="subcellular location">
    <subcellularLocation>
        <location evidence="4">Membrane</location>
        <topology evidence="4">Single-pass type II membrane protein</topology>
    </subcellularLocation>
</comment>
<comment type="similarity">
    <text evidence="4">Belongs to the GOLM family.</text>
</comment>
<protein>
    <recommendedName>
        <fullName evidence="4">Protein GOLM2</fullName>
    </recommendedName>
    <alternativeName>
        <fullName>Cancer susceptibility candidate gene 4 protein homolog</fullName>
        <shortName>CASC4</shortName>
    </alternativeName>
    <alternativeName>
        <fullName evidence="4">Golgi membrane protein 2</fullName>
    </alternativeName>
</protein>
<feature type="chain" id="PRO_0000291845" description="Protein GOLM2">
    <location>
        <begin position="1"/>
        <end position="436"/>
    </location>
</feature>
<feature type="topological domain" description="Cytoplasmic" evidence="2">
    <location>
        <begin position="1"/>
        <end position="14"/>
    </location>
</feature>
<feature type="transmembrane region" description="Helical; Signal-anchor for type II membrane protein" evidence="2">
    <location>
        <begin position="15"/>
        <end position="35"/>
    </location>
</feature>
<feature type="topological domain" description="Lumenal" evidence="2">
    <location>
        <begin position="36"/>
        <end position="436"/>
    </location>
</feature>
<feature type="region of interest" description="Disordered" evidence="3">
    <location>
        <begin position="193"/>
        <end position="436"/>
    </location>
</feature>
<feature type="coiled-coil region" evidence="2">
    <location>
        <begin position="35"/>
        <end position="195"/>
    </location>
</feature>
<feature type="compositionally biased region" description="Basic and acidic residues" evidence="3">
    <location>
        <begin position="193"/>
        <end position="207"/>
    </location>
</feature>
<feature type="compositionally biased region" description="Basic and acidic residues" evidence="3">
    <location>
        <begin position="224"/>
        <end position="247"/>
    </location>
</feature>
<feature type="compositionally biased region" description="Polar residues" evidence="3">
    <location>
        <begin position="275"/>
        <end position="295"/>
    </location>
</feature>
<feature type="compositionally biased region" description="Polar residues" evidence="3">
    <location>
        <begin position="305"/>
        <end position="321"/>
    </location>
</feature>
<feature type="compositionally biased region" description="Basic and acidic residues" evidence="3">
    <location>
        <begin position="344"/>
        <end position="362"/>
    </location>
</feature>
<feature type="compositionally biased region" description="Acidic residues" evidence="3">
    <location>
        <begin position="399"/>
        <end position="418"/>
    </location>
</feature>
<feature type="compositionally biased region" description="Basic and acidic residues" evidence="3">
    <location>
        <begin position="426"/>
        <end position="436"/>
    </location>
</feature>
<feature type="modified residue" description="N-acetylmethionine" evidence="1">
    <location>
        <position position="1"/>
    </location>
</feature>
<feature type="modified residue" description="Phosphoserine" evidence="1">
    <location>
        <position position="233"/>
    </location>
</feature>
<feature type="modified residue" description="Phosphoserine" evidence="1">
    <location>
        <position position="275"/>
    </location>
</feature>
<feature type="modified residue" description="Phosphoserine" evidence="1">
    <location>
        <position position="328"/>
    </location>
</feature>
<feature type="modified residue" description="Phosphoserine" evidence="1">
    <location>
        <position position="332"/>
    </location>
</feature>
<feature type="modified residue" description="Phosphoserine" evidence="1">
    <location>
        <position position="366"/>
    </location>
</feature>
<keyword id="KW-0007">Acetylation</keyword>
<keyword id="KW-0175">Coiled coil</keyword>
<keyword id="KW-0472">Membrane</keyword>
<keyword id="KW-0597">Phosphoprotein</keyword>
<keyword id="KW-1185">Reference proteome</keyword>
<keyword id="KW-0735">Signal-anchor</keyword>
<keyword id="KW-0812">Transmembrane</keyword>
<keyword id="KW-1133">Transmembrane helix</keyword>
<proteinExistence type="evidence at transcript level"/>
<name>GOLM2_PONAB</name>
<dbReference type="EMBL" id="CR860727">
    <property type="protein sequence ID" value="CAH92842.1"/>
    <property type="molecule type" value="mRNA"/>
</dbReference>
<dbReference type="RefSeq" id="NP_001126659.1">
    <property type="nucleotide sequence ID" value="NM_001133187.1"/>
</dbReference>
<dbReference type="SMR" id="Q5R5X4"/>
<dbReference type="FunCoup" id="Q5R5X4">
    <property type="interactions" value="1442"/>
</dbReference>
<dbReference type="STRING" id="9601.ENSPPYP00000007285"/>
<dbReference type="GeneID" id="100173659"/>
<dbReference type="KEGG" id="pon:100173659"/>
<dbReference type="CTD" id="113201"/>
<dbReference type="eggNOG" id="ENOG502QTYH">
    <property type="taxonomic scope" value="Eukaryota"/>
</dbReference>
<dbReference type="InParanoid" id="Q5R5X4"/>
<dbReference type="OrthoDB" id="10072022at2759"/>
<dbReference type="Proteomes" id="UP000001595">
    <property type="component" value="Unplaced"/>
</dbReference>
<dbReference type="GO" id="GO:0016020">
    <property type="term" value="C:membrane"/>
    <property type="evidence" value="ECO:0007669"/>
    <property type="project" value="UniProtKB-SubCell"/>
</dbReference>
<dbReference type="InterPro" id="IPR026139">
    <property type="entry name" value="GOLM1/CASC4"/>
</dbReference>
<dbReference type="PANTHER" id="PTHR15896">
    <property type="entry name" value="GOLGI PHOSPHOPROTEIN 2/GP73-RELATED"/>
    <property type="match status" value="1"/>
</dbReference>
<dbReference type="PANTHER" id="PTHR15896:SF7">
    <property type="entry name" value="PROTEIN GOLM2"/>
    <property type="match status" value="1"/>
</dbReference>
<dbReference type="PRINTS" id="PR02084">
    <property type="entry name" value="GOLM1CASC4"/>
</dbReference>
<reference key="1">
    <citation type="submission" date="2004-11" db="EMBL/GenBank/DDBJ databases">
        <authorList>
            <consortium name="The German cDNA consortium"/>
        </authorList>
    </citation>
    <scope>NUCLEOTIDE SEQUENCE [LARGE SCALE MRNA]</scope>
    <source>
        <tissue>Brain cortex</tissue>
    </source>
</reference>
<gene>
    <name type="primary">GOLM2</name>
    <name evidence="1" type="synonym">CASC4</name>
</gene>